<accession>Q8NW14</accession>
<dbReference type="EC" id="4.1.99.12" evidence="1"/>
<dbReference type="EC" id="3.5.4.25" evidence="1"/>
<dbReference type="EMBL" id="BA000033">
    <property type="protein sequence ID" value="BAB95574.1"/>
    <property type="molecule type" value="Genomic_DNA"/>
</dbReference>
<dbReference type="SMR" id="Q8NW14"/>
<dbReference type="KEGG" id="sam:MW1709"/>
<dbReference type="HOGENOM" id="CLU_020273_1_2_9"/>
<dbReference type="UniPathway" id="UPA00275">
    <property type="reaction ID" value="UER00399"/>
</dbReference>
<dbReference type="UniPathway" id="UPA00275">
    <property type="reaction ID" value="UER00400"/>
</dbReference>
<dbReference type="GO" id="GO:0005829">
    <property type="term" value="C:cytosol"/>
    <property type="evidence" value="ECO:0007669"/>
    <property type="project" value="TreeGrafter"/>
</dbReference>
<dbReference type="GO" id="GO:0008686">
    <property type="term" value="F:3,4-dihydroxy-2-butanone-4-phosphate synthase activity"/>
    <property type="evidence" value="ECO:0007669"/>
    <property type="project" value="UniProtKB-UniRule"/>
</dbReference>
<dbReference type="GO" id="GO:0005525">
    <property type="term" value="F:GTP binding"/>
    <property type="evidence" value="ECO:0007669"/>
    <property type="project" value="UniProtKB-KW"/>
</dbReference>
<dbReference type="GO" id="GO:0003935">
    <property type="term" value="F:GTP cyclohydrolase II activity"/>
    <property type="evidence" value="ECO:0007669"/>
    <property type="project" value="UniProtKB-UniRule"/>
</dbReference>
<dbReference type="GO" id="GO:0000287">
    <property type="term" value="F:magnesium ion binding"/>
    <property type="evidence" value="ECO:0007669"/>
    <property type="project" value="UniProtKB-UniRule"/>
</dbReference>
<dbReference type="GO" id="GO:0030145">
    <property type="term" value="F:manganese ion binding"/>
    <property type="evidence" value="ECO:0007669"/>
    <property type="project" value="UniProtKB-UniRule"/>
</dbReference>
<dbReference type="GO" id="GO:0008270">
    <property type="term" value="F:zinc ion binding"/>
    <property type="evidence" value="ECO:0007669"/>
    <property type="project" value="UniProtKB-UniRule"/>
</dbReference>
<dbReference type="GO" id="GO:0009231">
    <property type="term" value="P:riboflavin biosynthetic process"/>
    <property type="evidence" value="ECO:0007669"/>
    <property type="project" value="UniProtKB-UniRule"/>
</dbReference>
<dbReference type="CDD" id="cd00641">
    <property type="entry name" value="GTP_cyclohydro2"/>
    <property type="match status" value="1"/>
</dbReference>
<dbReference type="FunFam" id="3.40.50.10990:FF:000002">
    <property type="entry name" value="GTP cyclohydrolase-2"/>
    <property type="match status" value="1"/>
</dbReference>
<dbReference type="FunFam" id="3.90.870.10:FF:000001">
    <property type="entry name" value="Riboflavin biosynthesis protein RibBA"/>
    <property type="match status" value="1"/>
</dbReference>
<dbReference type="Gene3D" id="3.90.870.10">
    <property type="entry name" value="DHBP synthase"/>
    <property type="match status" value="1"/>
</dbReference>
<dbReference type="Gene3D" id="3.40.50.10990">
    <property type="entry name" value="GTP cyclohydrolase II"/>
    <property type="match status" value="1"/>
</dbReference>
<dbReference type="HAMAP" id="MF_00179">
    <property type="entry name" value="RibA"/>
    <property type="match status" value="1"/>
</dbReference>
<dbReference type="HAMAP" id="MF_00180">
    <property type="entry name" value="RibB"/>
    <property type="match status" value="1"/>
</dbReference>
<dbReference type="HAMAP" id="MF_01283">
    <property type="entry name" value="RibBA"/>
    <property type="match status" value="1"/>
</dbReference>
<dbReference type="InterPro" id="IPR017945">
    <property type="entry name" value="DHBP_synth_RibB-like_a/b_dom"/>
</dbReference>
<dbReference type="InterPro" id="IPR000422">
    <property type="entry name" value="DHBP_synthase_RibB"/>
</dbReference>
<dbReference type="InterPro" id="IPR032677">
    <property type="entry name" value="GTP_cyclohydro_II"/>
</dbReference>
<dbReference type="InterPro" id="IPR000926">
    <property type="entry name" value="RibA"/>
</dbReference>
<dbReference type="InterPro" id="IPR036144">
    <property type="entry name" value="RibA-like_sf"/>
</dbReference>
<dbReference type="InterPro" id="IPR016299">
    <property type="entry name" value="Riboflavin_synth_RibBA"/>
</dbReference>
<dbReference type="NCBIfam" id="NF001591">
    <property type="entry name" value="PRK00393.1"/>
    <property type="match status" value="1"/>
</dbReference>
<dbReference type="NCBIfam" id="TIGR00505">
    <property type="entry name" value="ribA"/>
    <property type="match status" value="1"/>
</dbReference>
<dbReference type="NCBIfam" id="TIGR00506">
    <property type="entry name" value="ribB"/>
    <property type="match status" value="1"/>
</dbReference>
<dbReference type="PANTHER" id="PTHR21327:SF18">
    <property type="entry name" value="3,4-DIHYDROXY-2-BUTANONE 4-PHOSPHATE SYNTHASE"/>
    <property type="match status" value="1"/>
</dbReference>
<dbReference type="PANTHER" id="PTHR21327">
    <property type="entry name" value="GTP CYCLOHYDROLASE II-RELATED"/>
    <property type="match status" value="1"/>
</dbReference>
<dbReference type="Pfam" id="PF00926">
    <property type="entry name" value="DHBP_synthase"/>
    <property type="match status" value="1"/>
</dbReference>
<dbReference type="Pfam" id="PF00925">
    <property type="entry name" value="GTP_cyclohydro2"/>
    <property type="match status" value="1"/>
</dbReference>
<dbReference type="PIRSF" id="PIRSF001259">
    <property type="entry name" value="RibA"/>
    <property type="match status" value="1"/>
</dbReference>
<dbReference type="SUPFAM" id="SSF142695">
    <property type="entry name" value="RibA-like"/>
    <property type="match status" value="1"/>
</dbReference>
<dbReference type="SUPFAM" id="SSF55821">
    <property type="entry name" value="YrdC/RibB"/>
    <property type="match status" value="1"/>
</dbReference>
<feature type="chain" id="PRO_0000151738" description="Riboflavin biosynthesis protein RibBA">
    <location>
        <begin position="1"/>
        <end position="393"/>
    </location>
</feature>
<feature type="region of interest" description="DHBP synthase">
    <location>
        <begin position="1"/>
        <end position="200"/>
    </location>
</feature>
<feature type="region of interest" description="GTP cyclohydrolase II">
    <location>
        <begin position="201"/>
        <end position="393"/>
    </location>
</feature>
<feature type="active site" description="Proton acceptor; for GTP cyclohydrolase activity" evidence="1">
    <location>
        <position position="325"/>
    </location>
</feature>
<feature type="active site" description="Nucleophile; for GTP cyclohydrolase activity" evidence="1">
    <location>
        <position position="327"/>
    </location>
</feature>
<feature type="binding site" evidence="1">
    <location>
        <begin position="27"/>
        <end position="28"/>
    </location>
    <ligand>
        <name>D-ribulose 5-phosphate</name>
        <dbReference type="ChEBI" id="CHEBI:58121"/>
    </ligand>
</feature>
<feature type="binding site" evidence="1">
    <location>
        <position position="28"/>
    </location>
    <ligand>
        <name>Mg(2+)</name>
        <dbReference type="ChEBI" id="CHEBI:18420"/>
        <label>1</label>
    </ligand>
</feature>
<feature type="binding site" evidence="1">
    <location>
        <position position="28"/>
    </location>
    <ligand>
        <name>Mg(2+)</name>
        <dbReference type="ChEBI" id="CHEBI:18420"/>
        <label>2</label>
    </ligand>
</feature>
<feature type="binding site" evidence="1">
    <location>
        <position position="32"/>
    </location>
    <ligand>
        <name>D-ribulose 5-phosphate</name>
        <dbReference type="ChEBI" id="CHEBI:58121"/>
    </ligand>
</feature>
<feature type="binding site" evidence="1">
    <location>
        <begin position="139"/>
        <end position="143"/>
    </location>
    <ligand>
        <name>D-ribulose 5-phosphate</name>
        <dbReference type="ChEBI" id="CHEBI:58121"/>
    </ligand>
</feature>
<feature type="binding site" evidence="1">
    <location>
        <position position="142"/>
    </location>
    <ligand>
        <name>Mg(2+)</name>
        <dbReference type="ChEBI" id="CHEBI:18420"/>
        <label>2</label>
    </ligand>
</feature>
<feature type="binding site" evidence="1">
    <location>
        <position position="163"/>
    </location>
    <ligand>
        <name>D-ribulose 5-phosphate</name>
        <dbReference type="ChEBI" id="CHEBI:58121"/>
    </ligand>
</feature>
<feature type="binding site" evidence="1">
    <location>
        <begin position="249"/>
        <end position="253"/>
    </location>
    <ligand>
        <name>GTP</name>
        <dbReference type="ChEBI" id="CHEBI:37565"/>
    </ligand>
</feature>
<feature type="binding site" evidence="1">
    <location>
        <position position="254"/>
    </location>
    <ligand>
        <name>Zn(2+)</name>
        <dbReference type="ChEBI" id="CHEBI:29105"/>
        <note>catalytic</note>
    </ligand>
</feature>
<feature type="binding site" evidence="1">
    <location>
        <position position="265"/>
    </location>
    <ligand>
        <name>Zn(2+)</name>
        <dbReference type="ChEBI" id="CHEBI:29105"/>
        <note>catalytic</note>
    </ligand>
</feature>
<feature type="binding site" evidence="1">
    <location>
        <position position="267"/>
    </location>
    <ligand>
        <name>Zn(2+)</name>
        <dbReference type="ChEBI" id="CHEBI:29105"/>
        <note>catalytic</note>
    </ligand>
</feature>
<feature type="binding site" evidence="1">
    <location>
        <position position="270"/>
    </location>
    <ligand>
        <name>GTP</name>
        <dbReference type="ChEBI" id="CHEBI:37565"/>
    </ligand>
</feature>
<feature type="binding site" evidence="1">
    <location>
        <begin position="291"/>
        <end position="293"/>
    </location>
    <ligand>
        <name>GTP</name>
        <dbReference type="ChEBI" id="CHEBI:37565"/>
    </ligand>
</feature>
<feature type="binding site" evidence="1">
    <location>
        <position position="313"/>
    </location>
    <ligand>
        <name>GTP</name>
        <dbReference type="ChEBI" id="CHEBI:37565"/>
    </ligand>
</feature>
<feature type="binding site" evidence="1">
    <location>
        <position position="348"/>
    </location>
    <ligand>
        <name>GTP</name>
        <dbReference type="ChEBI" id="CHEBI:37565"/>
    </ligand>
</feature>
<feature type="binding site" evidence="1">
    <location>
        <position position="353"/>
    </location>
    <ligand>
        <name>GTP</name>
        <dbReference type="ChEBI" id="CHEBI:37565"/>
    </ligand>
</feature>
<feature type="site" description="Essential for DHBP synthase activity" evidence="1">
    <location>
        <position position="125"/>
    </location>
</feature>
<feature type="site" description="Essential for DHBP synthase activity" evidence="1">
    <location>
        <position position="163"/>
    </location>
</feature>
<keyword id="KW-0342">GTP-binding</keyword>
<keyword id="KW-0378">Hydrolase</keyword>
<keyword id="KW-0456">Lyase</keyword>
<keyword id="KW-0460">Magnesium</keyword>
<keyword id="KW-0464">Manganese</keyword>
<keyword id="KW-0479">Metal-binding</keyword>
<keyword id="KW-0511">Multifunctional enzyme</keyword>
<keyword id="KW-0547">Nucleotide-binding</keyword>
<keyword id="KW-0686">Riboflavin biosynthesis</keyword>
<keyword id="KW-0862">Zinc</keyword>
<sequence>MQFDNIDSALMALKNGETIIVVDDENRENEGDLVAVTEWMNDNTINFMAKEARGLICAPVSKDIAQRLDLVQMVDDNSDIFGTQFTVSIDHVDTTTGISAYERTLTAKKLIDPSSEAKDFNRPGHLFPLVAQDKGVLARNGHTEAAVDLAKLTGAKPAGVICEIMNDDGTMAKGQDLQKFKEKHQLKMITIDDLIEYRKKLEPEIEFKAKVKMPTDFGTFDMYGFKATYTDEEIVVLTKGAIRQHENVRLHSACLTGDIFHSQRCDCGAQLESSMKYINEHGGMIIYLPQEGRGIGLLNKLRAYELIEQGYDTVTANLALGFDEDLRDYHIAAQILKYFNIEHINLLSNNPSKFEGLKQYGIDIAERIEVIVPETVHNHDYMETKKIKMGHLI</sequence>
<evidence type="ECO:0000255" key="1">
    <source>
        <dbReference type="HAMAP-Rule" id="MF_01283"/>
    </source>
</evidence>
<reference key="1">
    <citation type="journal article" date="2002" name="Lancet">
        <title>Genome and virulence determinants of high virulence community-acquired MRSA.</title>
        <authorList>
            <person name="Baba T."/>
            <person name="Takeuchi F."/>
            <person name="Kuroda M."/>
            <person name="Yuzawa H."/>
            <person name="Aoki K."/>
            <person name="Oguchi A."/>
            <person name="Nagai Y."/>
            <person name="Iwama N."/>
            <person name="Asano K."/>
            <person name="Naimi T."/>
            <person name="Kuroda H."/>
            <person name="Cui L."/>
            <person name="Yamamoto K."/>
            <person name="Hiramatsu K."/>
        </authorList>
    </citation>
    <scope>NUCLEOTIDE SEQUENCE [LARGE SCALE GENOMIC DNA]</scope>
    <source>
        <strain>MW2</strain>
    </source>
</reference>
<gene>
    <name evidence="1" type="primary">ribBA</name>
    <name type="synonym">ribA</name>
    <name type="ordered locus">MW1709</name>
</gene>
<name>RIBBA_STAAW</name>
<organism>
    <name type="scientific">Staphylococcus aureus (strain MW2)</name>
    <dbReference type="NCBI Taxonomy" id="196620"/>
    <lineage>
        <taxon>Bacteria</taxon>
        <taxon>Bacillati</taxon>
        <taxon>Bacillota</taxon>
        <taxon>Bacilli</taxon>
        <taxon>Bacillales</taxon>
        <taxon>Staphylococcaceae</taxon>
        <taxon>Staphylococcus</taxon>
    </lineage>
</organism>
<comment type="function">
    <text evidence="1">Catalyzes the conversion of D-ribulose 5-phosphate to formate and 3,4-dihydroxy-2-butanone 4-phosphate.</text>
</comment>
<comment type="function">
    <text evidence="1">Catalyzes the conversion of GTP to 2,5-diamino-6-ribosylamino-4(3H)-pyrimidinone 5'-phosphate (DARP), formate and pyrophosphate.</text>
</comment>
<comment type="catalytic activity">
    <reaction evidence="1">
        <text>D-ribulose 5-phosphate = (2S)-2-hydroxy-3-oxobutyl phosphate + formate + H(+)</text>
        <dbReference type="Rhea" id="RHEA:18457"/>
        <dbReference type="ChEBI" id="CHEBI:15378"/>
        <dbReference type="ChEBI" id="CHEBI:15740"/>
        <dbReference type="ChEBI" id="CHEBI:58121"/>
        <dbReference type="ChEBI" id="CHEBI:58830"/>
        <dbReference type="EC" id="4.1.99.12"/>
    </reaction>
</comment>
<comment type="catalytic activity">
    <reaction evidence="1">
        <text>GTP + 4 H2O = 2,5-diamino-6-hydroxy-4-(5-phosphoribosylamino)-pyrimidine + formate + 2 phosphate + 3 H(+)</text>
        <dbReference type="Rhea" id="RHEA:23704"/>
        <dbReference type="ChEBI" id="CHEBI:15377"/>
        <dbReference type="ChEBI" id="CHEBI:15378"/>
        <dbReference type="ChEBI" id="CHEBI:15740"/>
        <dbReference type="ChEBI" id="CHEBI:37565"/>
        <dbReference type="ChEBI" id="CHEBI:43474"/>
        <dbReference type="ChEBI" id="CHEBI:58614"/>
        <dbReference type="EC" id="3.5.4.25"/>
    </reaction>
</comment>
<comment type="cofactor">
    <cofactor evidence="1">
        <name>Mg(2+)</name>
        <dbReference type="ChEBI" id="CHEBI:18420"/>
    </cofactor>
    <cofactor evidence="1">
        <name>Mn(2+)</name>
        <dbReference type="ChEBI" id="CHEBI:29035"/>
    </cofactor>
    <text evidence="1">Binds 2 divalent metal cations per subunit. Magnesium or manganese.</text>
</comment>
<comment type="cofactor">
    <cofactor evidence="1">
        <name>Zn(2+)</name>
        <dbReference type="ChEBI" id="CHEBI:29105"/>
    </cofactor>
    <text evidence="1">Binds 1 zinc ion per subunit.</text>
</comment>
<comment type="pathway">
    <text evidence="1">Cofactor biosynthesis; riboflavin biosynthesis; 2-hydroxy-3-oxobutyl phosphate from D-ribulose 5-phosphate: step 1/1.</text>
</comment>
<comment type="pathway">
    <text evidence="1">Cofactor biosynthesis; riboflavin biosynthesis; 5-amino-6-(D-ribitylamino)uracil from GTP: step 1/4.</text>
</comment>
<comment type="similarity">
    <text evidence="1">In the N-terminal section; belongs to the DHBP synthase family.</text>
</comment>
<comment type="similarity">
    <text evidence="1">In the C-terminal section; belongs to the GTP cyclohydrolase II family.</text>
</comment>
<protein>
    <recommendedName>
        <fullName evidence="1">Riboflavin biosynthesis protein RibBA</fullName>
    </recommendedName>
    <domain>
        <recommendedName>
            <fullName evidence="1">3,4-dihydroxy-2-butanone 4-phosphate synthase</fullName>
            <shortName evidence="1">DHBP synthase</shortName>
            <ecNumber evidence="1">4.1.99.12</ecNumber>
        </recommendedName>
    </domain>
    <domain>
        <recommendedName>
            <fullName evidence="1">GTP cyclohydrolase-2</fullName>
            <ecNumber evidence="1">3.5.4.25</ecNumber>
        </recommendedName>
        <alternativeName>
            <fullName evidence="1">GTP cyclohydrolase II</fullName>
        </alternativeName>
    </domain>
</protein>
<proteinExistence type="inferred from homology"/>